<proteinExistence type="inferred from homology"/>
<accession>A5ITR2</accession>
<protein>
    <recommendedName>
        <fullName evidence="1">UDP-N-acetylmuramate--L-alanine ligase</fullName>
        <ecNumber evidence="1">6.3.2.8</ecNumber>
    </recommendedName>
    <alternativeName>
        <fullName evidence="1">UDP-N-acetylmuramoyl-L-alanine synthetase</fullName>
    </alternativeName>
</protein>
<name>MURC_STAA9</name>
<keyword id="KW-0067">ATP-binding</keyword>
<keyword id="KW-0131">Cell cycle</keyword>
<keyword id="KW-0132">Cell division</keyword>
<keyword id="KW-0133">Cell shape</keyword>
<keyword id="KW-0961">Cell wall biogenesis/degradation</keyword>
<keyword id="KW-0963">Cytoplasm</keyword>
<keyword id="KW-0436">Ligase</keyword>
<keyword id="KW-0547">Nucleotide-binding</keyword>
<keyword id="KW-0573">Peptidoglycan synthesis</keyword>
<gene>
    <name evidence="1" type="primary">murC</name>
    <name type="ordered locus">SaurJH9_1795</name>
</gene>
<feature type="chain" id="PRO_1000074758" description="UDP-N-acetylmuramate--L-alanine ligase">
    <location>
        <begin position="1"/>
        <end position="437"/>
    </location>
</feature>
<feature type="binding site" evidence="1">
    <location>
        <begin position="108"/>
        <end position="114"/>
    </location>
    <ligand>
        <name>ATP</name>
        <dbReference type="ChEBI" id="CHEBI:30616"/>
    </ligand>
</feature>
<evidence type="ECO:0000255" key="1">
    <source>
        <dbReference type="HAMAP-Rule" id="MF_00046"/>
    </source>
</evidence>
<comment type="function">
    <text evidence="1">Cell wall formation.</text>
</comment>
<comment type="catalytic activity">
    <reaction evidence="1">
        <text>UDP-N-acetyl-alpha-D-muramate + L-alanine + ATP = UDP-N-acetyl-alpha-D-muramoyl-L-alanine + ADP + phosphate + H(+)</text>
        <dbReference type="Rhea" id="RHEA:23372"/>
        <dbReference type="ChEBI" id="CHEBI:15378"/>
        <dbReference type="ChEBI" id="CHEBI:30616"/>
        <dbReference type="ChEBI" id="CHEBI:43474"/>
        <dbReference type="ChEBI" id="CHEBI:57972"/>
        <dbReference type="ChEBI" id="CHEBI:70757"/>
        <dbReference type="ChEBI" id="CHEBI:83898"/>
        <dbReference type="ChEBI" id="CHEBI:456216"/>
        <dbReference type="EC" id="6.3.2.8"/>
    </reaction>
</comment>
<comment type="pathway">
    <text evidence="1">Cell wall biogenesis; peptidoglycan biosynthesis.</text>
</comment>
<comment type="subcellular location">
    <subcellularLocation>
        <location evidence="1">Cytoplasm</location>
    </subcellularLocation>
</comment>
<comment type="similarity">
    <text evidence="1">Belongs to the MurCDEF family.</text>
</comment>
<reference key="1">
    <citation type="submission" date="2007-05" db="EMBL/GenBank/DDBJ databases">
        <title>Complete sequence of chromosome of Staphylococcus aureus subsp. aureus JH9.</title>
        <authorList>
            <consortium name="US DOE Joint Genome Institute"/>
            <person name="Copeland A."/>
            <person name="Lucas S."/>
            <person name="Lapidus A."/>
            <person name="Barry K."/>
            <person name="Detter J.C."/>
            <person name="Glavina del Rio T."/>
            <person name="Hammon N."/>
            <person name="Israni S."/>
            <person name="Pitluck S."/>
            <person name="Chain P."/>
            <person name="Malfatti S."/>
            <person name="Shin M."/>
            <person name="Vergez L."/>
            <person name="Schmutz J."/>
            <person name="Larimer F."/>
            <person name="Land M."/>
            <person name="Hauser L."/>
            <person name="Kyrpides N."/>
            <person name="Kim E."/>
            <person name="Tomasz A."/>
            <person name="Richardson P."/>
        </authorList>
    </citation>
    <scope>NUCLEOTIDE SEQUENCE [LARGE SCALE GENOMIC DNA]</scope>
    <source>
        <strain>JH9</strain>
    </source>
</reference>
<sequence>MTHYHFVGIKGSGMSSLAQIMHDLGHEVQGSDIENYVFTEVALRNKGIKILPFDANNIKEDMVVIQGNAFASSHEEIVRAHQLKLDVVSYNDFLGQIIDQYTSVAVTGAHGKTSTTGLLSHVMNGDKKTSFLIGDGTGMGLPESDYFAFEACEYRRHFLSYKPDYAIMTNIDFDHPDYFKDINDVFDAFQEMAHNVKKGIIAWGDDEHLRKIEADVPIYYYGFKDSDDIYAQNIQITDKGTAFDVYVDGEFYDHFLSPQYGDHTVLNALAVIAISYLEKLDVTNIKEALETFGGVKRRFNETTIANQVIVDDYAHHPREISATIETARKKYPHKEVVAVFQPHTFSRTQAFLNEFAESLSKADRVFLCEIFGSIRENTGALTIQDLIDKIEGASLINEDSINVLEQFDNAVVLFMGAGDIQKLQNAYLDKLGMKNAF</sequence>
<organism>
    <name type="scientific">Staphylococcus aureus (strain JH9)</name>
    <dbReference type="NCBI Taxonomy" id="359786"/>
    <lineage>
        <taxon>Bacteria</taxon>
        <taxon>Bacillati</taxon>
        <taxon>Bacillota</taxon>
        <taxon>Bacilli</taxon>
        <taxon>Bacillales</taxon>
        <taxon>Staphylococcaceae</taxon>
        <taxon>Staphylococcus</taxon>
    </lineage>
</organism>
<dbReference type="EC" id="6.3.2.8" evidence="1"/>
<dbReference type="EMBL" id="CP000703">
    <property type="protein sequence ID" value="ABQ49585.1"/>
    <property type="molecule type" value="Genomic_DNA"/>
</dbReference>
<dbReference type="RefSeq" id="WP_000150169.1">
    <property type="nucleotide sequence ID" value="NC_009487.1"/>
</dbReference>
<dbReference type="SMR" id="A5ITR2"/>
<dbReference type="KEGG" id="saj:SaurJH9_1795"/>
<dbReference type="HOGENOM" id="CLU_028104_1_0_9"/>
<dbReference type="UniPathway" id="UPA00219"/>
<dbReference type="GO" id="GO:0005737">
    <property type="term" value="C:cytoplasm"/>
    <property type="evidence" value="ECO:0007669"/>
    <property type="project" value="UniProtKB-SubCell"/>
</dbReference>
<dbReference type="GO" id="GO:0005524">
    <property type="term" value="F:ATP binding"/>
    <property type="evidence" value="ECO:0007669"/>
    <property type="project" value="UniProtKB-UniRule"/>
</dbReference>
<dbReference type="GO" id="GO:0008763">
    <property type="term" value="F:UDP-N-acetylmuramate-L-alanine ligase activity"/>
    <property type="evidence" value="ECO:0007669"/>
    <property type="project" value="UniProtKB-UniRule"/>
</dbReference>
<dbReference type="GO" id="GO:0051301">
    <property type="term" value="P:cell division"/>
    <property type="evidence" value="ECO:0007669"/>
    <property type="project" value="UniProtKB-KW"/>
</dbReference>
<dbReference type="GO" id="GO:0071555">
    <property type="term" value="P:cell wall organization"/>
    <property type="evidence" value="ECO:0007669"/>
    <property type="project" value="UniProtKB-KW"/>
</dbReference>
<dbReference type="GO" id="GO:0009252">
    <property type="term" value="P:peptidoglycan biosynthetic process"/>
    <property type="evidence" value="ECO:0007669"/>
    <property type="project" value="UniProtKB-UniRule"/>
</dbReference>
<dbReference type="GO" id="GO:0008360">
    <property type="term" value="P:regulation of cell shape"/>
    <property type="evidence" value="ECO:0007669"/>
    <property type="project" value="UniProtKB-KW"/>
</dbReference>
<dbReference type="Gene3D" id="3.90.190.20">
    <property type="entry name" value="Mur ligase, C-terminal domain"/>
    <property type="match status" value="1"/>
</dbReference>
<dbReference type="Gene3D" id="3.40.1190.10">
    <property type="entry name" value="Mur-like, catalytic domain"/>
    <property type="match status" value="1"/>
</dbReference>
<dbReference type="Gene3D" id="3.40.50.720">
    <property type="entry name" value="NAD(P)-binding Rossmann-like Domain"/>
    <property type="match status" value="1"/>
</dbReference>
<dbReference type="HAMAP" id="MF_00046">
    <property type="entry name" value="MurC"/>
    <property type="match status" value="1"/>
</dbReference>
<dbReference type="InterPro" id="IPR036565">
    <property type="entry name" value="Mur-like_cat_sf"/>
</dbReference>
<dbReference type="InterPro" id="IPR004101">
    <property type="entry name" value="Mur_ligase_C"/>
</dbReference>
<dbReference type="InterPro" id="IPR036615">
    <property type="entry name" value="Mur_ligase_C_dom_sf"/>
</dbReference>
<dbReference type="InterPro" id="IPR013221">
    <property type="entry name" value="Mur_ligase_cen"/>
</dbReference>
<dbReference type="InterPro" id="IPR000713">
    <property type="entry name" value="Mur_ligase_N"/>
</dbReference>
<dbReference type="InterPro" id="IPR050061">
    <property type="entry name" value="MurCDEF_pg_biosynth"/>
</dbReference>
<dbReference type="InterPro" id="IPR005758">
    <property type="entry name" value="UDP-N-AcMur_Ala_ligase_MurC"/>
</dbReference>
<dbReference type="NCBIfam" id="TIGR01082">
    <property type="entry name" value="murC"/>
    <property type="match status" value="1"/>
</dbReference>
<dbReference type="PANTHER" id="PTHR43445:SF3">
    <property type="entry name" value="UDP-N-ACETYLMURAMATE--L-ALANINE LIGASE"/>
    <property type="match status" value="1"/>
</dbReference>
<dbReference type="PANTHER" id="PTHR43445">
    <property type="entry name" value="UDP-N-ACETYLMURAMATE--L-ALANINE LIGASE-RELATED"/>
    <property type="match status" value="1"/>
</dbReference>
<dbReference type="Pfam" id="PF01225">
    <property type="entry name" value="Mur_ligase"/>
    <property type="match status" value="1"/>
</dbReference>
<dbReference type="Pfam" id="PF02875">
    <property type="entry name" value="Mur_ligase_C"/>
    <property type="match status" value="1"/>
</dbReference>
<dbReference type="Pfam" id="PF08245">
    <property type="entry name" value="Mur_ligase_M"/>
    <property type="match status" value="1"/>
</dbReference>
<dbReference type="SUPFAM" id="SSF51984">
    <property type="entry name" value="MurCD N-terminal domain"/>
    <property type="match status" value="1"/>
</dbReference>
<dbReference type="SUPFAM" id="SSF53623">
    <property type="entry name" value="MurD-like peptide ligases, catalytic domain"/>
    <property type="match status" value="1"/>
</dbReference>
<dbReference type="SUPFAM" id="SSF53244">
    <property type="entry name" value="MurD-like peptide ligases, peptide-binding domain"/>
    <property type="match status" value="1"/>
</dbReference>